<feature type="chain" id="PRO_0000355942" description="Maturase K">
    <location>
        <begin position="1"/>
        <end position="506"/>
    </location>
</feature>
<proteinExistence type="inferred from homology"/>
<sequence>MEKFQSYLGLDRSQQHHFLYPLIFQEYIYVLAHDHGLTRSILLENAGYDNKSSLLIVKRLINRMYQQNHLILSVNNSKQTPFLGHNKNFYSQVMSEVSSIIMEIPLSLRLISYLERKGVVKSDNLRSIHSIFSFLEDNFSHLNYVLDILIPYPAHLEILVQALRYWIKDASSLHLLRFFLHECHNWDSLITSNSKKASSSFSKRNHRLFFFLYTSHLCEYESGFLFLRNQSSHLRSTSSGALIERIYFYGKIDHLAEVFARAFQANLWLFKDPFMHYVRYQGKSILGSKGTFLLMNKWKYYFVNFWKSYFYLWSQPGRIYINQLSNHSLDFLGYRSSVRLKPSMVRSQMLENAFIIENAIKKFETIVPIMPLIGSLAKSKFCNALGHPIGKAIWADFSDSDIIDRFGRIYRNLSHYHSGSSKKKSLYRVKYILRLSCARTLARKHKSTVRAFLKRFGSELLEEFFTEEEQVFSLTFPRVSSISRRLSRRRIWYLDIICINDLANHE</sequence>
<name>MATK_LACSA</name>
<reference key="1">
    <citation type="journal article" date="2006" name="Transgenic Res.">
        <title>Efficient and stable transformation of Lactuca sativa L. cv. Cisco (lettuce) plastids.</title>
        <authorList>
            <person name="Kanamoto H."/>
            <person name="Yamashita A."/>
            <person name="Asao H."/>
            <person name="Okumura S."/>
            <person name="Takase H."/>
            <person name="Hattori M."/>
            <person name="Yokota A."/>
            <person name="Tomizawa K."/>
        </authorList>
    </citation>
    <scope>NUCLEOTIDE SEQUENCE [LARGE SCALE GENOMIC DNA]</scope>
    <source>
        <strain>cv. Cisco</strain>
    </source>
</reference>
<reference key="2">
    <citation type="submission" date="2006-01" db="EMBL/GenBank/DDBJ databases">
        <title>A comparison of the first two published chloroplast genomes in Asteraceae: Lactuca and Helianthus.</title>
        <authorList>
            <person name="Timme R.E."/>
            <person name="Kuehl J.V."/>
            <person name="Boore J.L."/>
            <person name="Jansen R.K."/>
        </authorList>
    </citation>
    <scope>NUCLEOTIDE SEQUENCE [LARGE SCALE GENOMIC DNA]</scope>
    <source>
        <strain>cv. Salinas</strain>
    </source>
</reference>
<organism>
    <name type="scientific">Lactuca sativa</name>
    <name type="common">Garden lettuce</name>
    <dbReference type="NCBI Taxonomy" id="4236"/>
    <lineage>
        <taxon>Eukaryota</taxon>
        <taxon>Viridiplantae</taxon>
        <taxon>Streptophyta</taxon>
        <taxon>Embryophyta</taxon>
        <taxon>Tracheophyta</taxon>
        <taxon>Spermatophyta</taxon>
        <taxon>Magnoliopsida</taxon>
        <taxon>eudicotyledons</taxon>
        <taxon>Gunneridae</taxon>
        <taxon>Pentapetalae</taxon>
        <taxon>asterids</taxon>
        <taxon>campanulids</taxon>
        <taxon>Asterales</taxon>
        <taxon>Asteraceae</taxon>
        <taxon>Cichorioideae</taxon>
        <taxon>Cichorieae</taxon>
        <taxon>Lactucinae</taxon>
        <taxon>Lactuca</taxon>
    </lineage>
</organism>
<geneLocation type="chloroplast"/>
<comment type="function">
    <text evidence="1">Usually encoded in the trnK tRNA gene intron. Probably assists in splicing its own and other chloroplast group II introns.</text>
</comment>
<comment type="subcellular location">
    <subcellularLocation>
        <location>Plastid</location>
        <location>Chloroplast</location>
    </subcellularLocation>
</comment>
<comment type="similarity">
    <text evidence="1">Belongs to the intron maturase 2 family. MatK subfamily.</text>
</comment>
<accession>Q332Z7</accession>
<evidence type="ECO:0000255" key="1">
    <source>
        <dbReference type="HAMAP-Rule" id="MF_01390"/>
    </source>
</evidence>
<protein>
    <recommendedName>
        <fullName evidence="1">Maturase K</fullName>
    </recommendedName>
    <alternativeName>
        <fullName evidence="1">Intron maturase</fullName>
    </alternativeName>
</protein>
<gene>
    <name evidence="1" type="primary">matK</name>
</gene>
<keyword id="KW-0150">Chloroplast</keyword>
<keyword id="KW-0507">mRNA processing</keyword>
<keyword id="KW-0934">Plastid</keyword>
<keyword id="KW-0694">RNA-binding</keyword>
<keyword id="KW-0819">tRNA processing</keyword>
<dbReference type="EMBL" id="DQ383816">
    <property type="protein sequence ID" value="ABD47214.1"/>
    <property type="molecule type" value="Genomic_DNA"/>
</dbReference>
<dbReference type="EMBL" id="AP007232">
    <property type="protein sequence ID" value="BAE47575.1"/>
    <property type="molecule type" value="Genomic_DNA"/>
</dbReference>
<dbReference type="RefSeq" id="YP_398310.1">
    <property type="nucleotide sequence ID" value="NC_007578.1"/>
</dbReference>
<dbReference type="GeneID" id="3772834"/>
<dbReference type="KEGG" id="lsv:3772834"/>
<dbReference type="OrthoDB" id="1886907at2759"/>
<dbReference type="GO" id="GO:0009507">
    <property type="term" value="C:chloroplast"/>
    <property type="evidence" value="ECO:0007669"/>
    <property type="project" value="UniProtKB-SubCell"/>
</dbReference>
<dbReference type="GO" id="GO:0003723">
    <property type="term" value="F:RNA binding"/>
    <property type="evidence" value="ECO:0007669"/>
    <property type="project" value="UniProtKB-KW"/>
</dbReference>
<dbReference type="GO" id="GO:0006397">
    <property type="term" value="P:mRNA processing"/>
    <property type="evidence" value="ECO:0007669"/>
    <property type="project" value="UniProtKB-KW"/>
</dbReference>
<dbReference type="GO" id="GO:0008380">
    <property type="term" value="P:RNA splicing"/>
    <property type="evidence" value="ECO:0007669"/>
    <property type="project" value="UniProtKB-UniRule"/>
</dbReference>
<dbReference type="GO" id="GO:0008033">
    <property type="term" value="P:tRNA processing"/>
    <property type="evidence" value="ECO:0007669"/>
    <property type="project" value="UniProtKB-KW"/>
</dbReference>
<dbReference type="HAMAP" id="MF_01390">
    <property type="entry name" value="MatK"/>
    <property type="match status" value="1"/>
</dbReference>
<dbReference type="InterPro" id="IPR024937">
    <property type="entry name" value="Domain_X"/>
</dbReference>
<dbReference type="InterPro" id="IPR002866">
    <property type="entry name" value="Maturase_MatK"/>
</dbReference>
<dbReference type="InterPro" id="IPR024942">
    <property type="entry name" value="Maturase_MatK_N"/>
</dbReference>
<dbReference type="PANTHER" id="PTHR34811">
    <property type="entry name" value="MATURASE K"/>
    <property type="match status" value="1"/>
</dbReference>
<dbReference type="PANTHER" id="PTHR34811:SF1">
    <property type="entry name" value="MATURASE K"/>
    <property type="match status" value="1"/>
</dbReference>
<dbReference type="Pfam" id="PF01348">
    <property type="entry name" value="Intron_maturas2"/>
    <property type="match status" value="1"/>
</dbReference>
<dbReference type="Pfam" id="PF01824">
    <property type="entry name" value="MatK_N"/>
    <property type="match status" value="1"/>
</dbReference>